<sequence>MARFFRRRKFCRFTAEDVKEIDYKDLNTLKAYVSETGKIVPSRITGTKARYQRQLATAIKRARFLALLAYTDSHGR</sequence>
<protein>
    <recommendedName>
        <fullName evidence="1">Small ribosomal subunit protein bS18</fullName>
    </recommendedName>
    <alternativeName>
        <fullName evidence="2">30S ribosomal protein S18</fullName>
    </alternativeName>
</protein>
<accession>Q4KJ61</accession>
<keyword id="KW-0687">Ribonucleoprotein</keyword>
<keyword id="KW-0689">Ribosomal protein</keyword>
<keyword id="KW-0694">RNA-binding</keyword>
<keyword id="KW-0699">rRNA-binding</keyword>
<name>RS18_PSEF5</name>
<feature type="chain" id="PRO_1000003569" description="Small ribosomal subunit protein bS18">
    <location>
        <begin position="1"/>
        <end position="76"/>
    </location>
</feature>
<organism>
    <name type="scientific">Pseudomonas fluorescens (strain ATCC BAA-477 / NRRL B-23932 / Pf-5)</name>
    <dbReference type="NCBI Taxonomy" id="220664"/>
    <lineage>
        <taxon>Bacteria</taxon>
        <taxon>Pseudomonadati</taxon>
        <taxon>Pseudomonadota</taxon>
        <taxon>Gammaproteobacteria</taxon>
        <taxon>Pseudomonadales</taxon>
        <taxon>Pseudomonadaceae</taxon>
        <taxon>Pseudomonas</taxon>
    </lineage>
</organism>
<gene>
    <name evidence="1" type="primary">rpsR</name>
    <name type="ordered locus">PFL_0580</name>
</gene>
<proteinExistence type="inferred from homology"/>
<dbReference type="EMBL" id="CP000076">
    <property type="protein sequence ID" value="AAY95987.1"/>
    <property type="molecule type" value="Genomic_DNA"/>
</dbReference>
<dbReference type="RefSeq" id="WP_002551829.1">
    <property type="nucleotide sequence ID" value="NC_004129.6"/>
</dbReference>
<dbReference type="SMR" id="Q4KJ61"/>
<dbReference type="STRING" id="220664.PFL_0580"/>
<dbReference type="GeneID" id="98109115"/>
<dbReference type="KEGG" id="pfl:PFL_0580"/>
<dbReference type="eggNOG" id="COG0238">
    <property type="taxonomic scope" value="Bacteria"/>
</dbReference>
<dbReference type="HOGENOM" id="CLU_148710_2_3_6"/>
<dbReference type="Proteomes" id="UP000008540">
    <property type="component" value="Chromosome"/>
</dbReference>
<dbReference type="GO" id="GO:0022627">
    <property type="term" value="C:cytosolic small ribosomal subunit"/>
    <property type="evidence" value="ECO:0007669"/>
    <property type="project" value="TreeGrafter"/>
</dbReference>
<dbReference type="GO" id="GO:0070181">
    <property type="term" value="F:small ribosomal subunit rRNA binding"/>
    <property type="evidence" value="ECO:0007669"/>
    <property type="project" value="TreeGrafter"/>
</dbReference>
<dbReference type="GO" id="GO:0003735">
    <property type="term" value="F:structural constituent of ribosome"/>
    <property type="evidence" value="ECO:0007669"/>
    <property type="project" value="InterPro"/>
</dbReference>
<dbReference type="GO" id="GO:0006412">
    <property type="term" value="P:translation"/>
    <property type="evidence" value="ECO:0007669"/>
    <property type="project" value="UniProtKB-UniRule"/>
</dbReference>
<dbReference type="FunFam" id="4.10.640.10:FF:000001">
    <property type="entry name" value="30S ribosomal protein S18"/>
    <property type="match status" value="1"/>
</dbReference>
<dbReference type="Gene3D" id="4.10.640.10">
    <property type="entry name" value="Ribosomal protein S18"/>
    <property type="match status" value="1"/>
</dbReference>
<dbReference type="HAMAP" id="MF_00270">
    <property type="entry name" value="Ribosomal_bS18"/>
    <property type="match status" value="1"/>
</dbReference>
<dbReference type="InterPro" id="IPR001648">
    <property type="entry name" value="Ribosomal_bS18"/>
</dbReference>
<dbReference type="InterPro" id="IPR018275">
    <property type="entry name" value="Ribosomal_bS18_CS"/>
</dbReference>
<dbReference type="InterPro" id="IPR036870">
    <property type="entry name" value="Ribosomal_bS18_sf"/>
</dbReference>
<dbReference type="NCBIfam" id="TIGR00165">
    <property type="entry name" value="S18"/>
    <property type="match status" value="1"/>
</dbReference>
<dbReference type="PANTHER" id="PTHR13479">
    <property type="entry name" value="30S RIBOSOMAL PROTEIN S18"/>
    <property type="match status" value="1"/>
</dbReference>
<dbReference type="PANTHER" id="PTHR13479:SF40">
    <property type="entry name" value="SMALL RIBOSOMAL SUBUNIT PROTEIN BS18M"/>
    <property type="match status" value="1"/>
</dbReference>
<dbReference type="Pfam" id="PF01084">
    <property type="entry name" value="Ribosomal_S18"/>
    <property type="match status" value="1"/>
</dbReference>
<dbReference type="PRINTS" id="PR00974">
    <property type="entry name" value="RIBOSOMALS18"/>
</dbReference>
<dbReference type="SUPFAM" id="SSF46911">
    <property type="entry name" value="Ribosomal protein S18"/>
    <property type="match status" value="1"/>
</dbReference>
<dbReference type="PROSITE" id="PS00057">
    <property type="entry name" value="RIBOSOMAL_S18"/>
    <property type="match status" value="1"/>
</dbReference>
<reference key="1">
    <citation type="journal article" date="2005" name="Nat. Biotechnol.">
        <title>Complete genome sequence of the plant commensal Pseudomonas fluorescens Pf-5.</title>
        <authorList>
            <person name="Paulsen I.T."/>
            <person name="Press C.M."/>
            <person name="Ravel J."/>
            <person name="Kobayashi D.Y."/>
            <person name="Myers G.S.A."/>
            <person name="Mavrodi D.V."/>
            <person name="DeBoy R.T."/>
            <person name="Seshadri R."/>
            <person name="Ren Q."/>
            <person name="Madupu R."/>
            <person name="Dodson R.J."/>
            <person name="Durkin A.S."/>
            <person name="Brinkac L.M."/>
            <person name="Daugherty S.C."/>
            <person name="Sullivan S.A."/>
            <person name="Rosovitz M.J."/>
            <person name="Gwinn M.L."/>
            <person name="Zhou L."/>
            <person name="Schneider D.J."/>
            <person name="Cartinhour S.W."/>
            <person name="Nelson W.C."/>
            <person name="Weidman J."/>
            <person name="Watkins K."/>
            <person name="Tran K."/>
            <person name="Khouri H."/>
            <person name="Pierson E.A."/>
            <person name="Pierson L.S. III"/>
            <person name="Thomashow L.S."/>
            <person name="Loper J.E."/>
        </authorList>
    </citation>
    <scope>NUCLEOTIDE SEQUENCE [LARGE SCALE GENOMIC DNA]</scope>
    <source>
        <strain>ATCC BAA-477 / NRRL B-23932 / Pf-5</strain>
    </source>
</reference>
<evidence type="ECO:0000255" key="1">
    <source>
        <dbReference type="HAMAP-Rule" id="MF_00270"/>
    </source>
</evidence>
<evidence type="ECO:0000305" key="2"/>
<comment type="function">
    <text evidence="1">Binds as a heterodimer with protein bS6 to the central domain of the 16S rRNA, where it helps stabilize the platform of the 30S subunit.</text>
</comment>
<comment type="subunit">
    <text evidence="1">Part of the 30S ribosomal subunit. Forms a tight heterodimer with protein bS6.</text>
</comment>
<comment type="similarity">
    <text evidence="1">Belongs to the bacterial ribosomal protein bS18 family.</text>
</comment>